<protein>
    <recommendedName>
        <fullName evidence="7">Short chain dehydrogenase/reductase dpfgH</fullName>
        <ecNumber evidence="6">1.1.1.-</ecNumber>
    </recommendedName>
    <alternativeName>
        <fullName evidence="7">Diterpenoid pyrone biosynthesis cluster protein H</fullName>
    </alternativeName>
</protein>
<reference key="1">
    <citation type="journal article" date="2007" name="Science">
        <title>The Fusarium graminearum genome reveals a link between localized polymorphism and pathogen specialization.</title>
        <authorList>
            <person name="Cuomo C.A."/>
            <person name="Gueldener U."/>
            <person name="Xu J.-R."/>
            <person name="Trail F."/>
            <person name="Turgeon B.G."/>
            <person name="Di Pietro A."/>
            <person name="Walton J.D."/>
            <person name="Ma L.-J."/>
            <person name="Baker S.E."/>
            <person name="Rep M."/>
            <person name="Adam G."/>
            <person name="Antoniw J."/>
            <person name="Baldwin T."/>
            <person name="Calvo S.E."/>
            <person name="Chang Y.-L."/>
            <person name="DeCaprio D."/>
            <person name="Gale L.R."/>
            <person name="Gnerre S."/>
            <person name="Goswami R.S."/>
            <person name="Hammond-Kosack K."/>
            <person name="Harris L.J."/>
            <person name="Hilburn K."/>
            <person name="Kennell J.C."/>
            <person name="Kroken S."/>
            <person name="Magnuson J.K."/>
            <person name="Mannhaupt G."/>
            <person name="Mauceli E.W."/>
            <person name="Mewes H.-W."/>
            <person name="Mitterbauer R."/>
            <person name="Muehlbauer G."/>
            <person name="Muensterkoetter M."/>
            <person name="Nelson D."/>
            <person name="O'Donnell K."/>
            <person name="Ouellet T."/>
            <person name="Qi W."/>
            <person name="Quesneville H."/>
            <person name="Roncero M.I.G."/>
            <person name="Seong K.-Y."/>
            <person name="Tetko I.V."/>
            <person name="Urban M."/>
            <person name="Waalwijk C."/>
            <person name="Ward T.J."/>
            <person name="Yao J."/>
            <person name="Birren B.W."/>
            <person name="Kistler H.C."/>
        </authorList>
    </citation>
    <scope>NUCLEOTIDE SEQUENCE [LARGE SCALE GENOMIC DNA]</scope>
    <source>
        <strain>ATCC MYA-4620 / CBS 123657 / FGSC 9075 / NRRL 31084 / PH-1</strain>
    </source>
</reference>
<reference key="2">
    <citation type="journal article" date="2010" name="Nature">
        <title>Comparative genomics reveals mobile pathogenicity chromosomes in Fusarium.</title>
        <authorList>
            <person name="Ma L.-J."/>
            <person name="van der Does H.C."/>
            <person name="Borkovich K.A."/>
            <person name="Coleman J.J."/>
            <person name="Daboussi M.-J."/>
            <person name="Di Pietro A."/>
            <person name="Dufresne M."/>
            <person name="Freitag M."/>
            <person name="Grabherr M."/>
            <person name="Henrissat B."/>
            <person name="Houterman P.M."/>
            <person name="Kang S."/>
            <person name="Shim W.-B."/>
            <person name="Woloshuk C."/>
            <person name="Xie X."/>
            <person name="Xu J.-R."/>
            <person name="Antoniw J."/>
            <person name="Baker S.E."/>
            <person name="Bluhm B.H."/>
            <person name="Breakspear A."/>
            <person name="Brown D.W."/>
            <person name="Butchko R.A.E."/>
            <person name="Chapman S."/>
            <person name="Coulson R."/>
            <person name="Coutinho P.M."/>
            <person name="Danchin E.G.J."/>
            <person name="Diener A."/>
            <person name="Gale L.R."/>
            <person name="Gardiner D.M."/>
            <person name="Goff S."/>
            <person name="Hammond-Kosack K.E."/>
            <person name="Hilburn K."/>
            <person name="Hua-Van A."/>
            <person name="Jonkers W."/>
            <person name="Kazan K."/>
            <person name="Kodira C.D."/>
            <person name="Koehrsen M."/>
            <person name="Kumar L."/>
            <person name="Lee Y.-H."/>
            <person name="Li L."/>
            <person name="Manners J.M."/>
            <person name="Miranda-Saavedra D."/>
            <person name="Mukherjee M."/>
            <person name="Park G."/>
            <person name="Park J."/>
            <person name="Park S.-Y."/>
            <person name="Proctor R.H."/>
            <person name="Regev A."/>
            <person name="Ruiz-Roldan M.C."/>
            <person name="Sain D."/>
            <person name="Sakthikumar S."/>
            <person name="Sykes S."/>
            <person name="Schwartz D.C."/>
            <person name="Turgeon B.G."/>
            <person name="Wapinski I."/>
            <person name="Yoder O."/>
            <person name="Young S."/>
            <person name="Zeng Q."/>
            <person name="Zhou S."/>
            <person name="Galagan J."/>
            <person name="Cuomo C.A."/>
            <person name="Kistler H.C."/>
            <person name="Rep M."/>
        </authorList>
    </citation>
    <scope>GENOME REANNOTATION</scope>
    <source>
        <strain>ATCC MYA-4620 / CBS 123657 / FGSC 9075 / NRRL 31084 / PH-1</strain>
    </source>
</reference>
<reference key="3">
    <citation type="journal article" date="2015" name="BMC Genomics">
        <title>The completed genome sequence of the pathogenic ascomycete fungus Fusarium graminearum.</title>
        <authorList>
            <person name="King R."/>
            <person name="Urban M."/>
            <person name="Hammond-Kosack M.C.U."/>
            <person name="Hassani-Pak K."/>
            <person name="Hammond-Kosack K.E."/>
        </authorList>
    </citation>
    <scope>NUCLEOTIDE SEQUENCE [LARGE SCALE GENOMIC DNA]</scope>
    <source>
        <strain>ATCC MYA-4620 / CBS 123657 / FGSC 9075 / NRRL 31084 / PH-1</strain>
    </source>
</reference>
<reference key="4">
    <citation type="journal article" date="2020" name="Nat. Commun.">
        <title>Synthetic biology based construction of biological activity-related library of fungal decalin-containing diterpenoid pyrones.</title>
        <authorList>
            <person name="Tsukada K."/>
            <person name="Shinki S."/>
            <person name="Kaneko A."/>
            <person name="Murakami K."/>
            <person name="Irie K."/>
            <person name="Murai M."/>
            <person name="Miyoshi H."/>
            <person name="Dan S."/>
            <person name="Kawaji K."/>
            <person name="Hayashi H."/>
            <person name="Kodama E.N."/>
            <person name="Hori A."/>
            <person name="Salim E."/>
            <person name="Kuraishi T."/>
            <person name="Hirata N."/>
            <person name="Kanda Y."/>
            <person name="Asai T."/>
        </authorList>
    </citation>
    <scope>FUNCTION</scope>
    <scope>CATALYTIC ACTIVITY</scope>
    <scope>PATHWAY</scope>
    <scope>BIOTECHNOLOGY</scope>
</reference>
<keyword id="KW-0325">Glycoprotein</keyword>
<keyword id="KW-0472">Membrane</keyword>
<keyword id="KW-0521">NADP</keyword>
<keyword id="KW-0560">Oxidoreductase</keyword>
<keyword id="KW-1185">Reference proteome</keyword>
<keyword id="KW-0812">Transmembrane</keyword>
<keyword id="KW-1133">Transmembrane helix</keyword>
<comment type="function">
    <text evidence="6 9">Short chain dehydrogenase/reductase; part of the gene cluster that mediates the biosynthesis of diterpenoid pyrones (PubMed:32286350). The first step of the pathway is the synthesis of the alpha-pyrone moiety by the polyketide synthase dpfgA via condensation of one acetyl-CoA starter unit with 3 malonyl-CoA units and 2 methylations (Probable). The alpha-pyrone is then combined with geranylgeranyl pyrophosphate (GGPP) formed by the GGPP synthase dpfgD through the action of the prenyltransferase dpfgC to yield a linear alpha-pyrone diterpenoid (Probable). Subsequent steps in the diterpenoid pyrone biosynthetic pathway involve the decalin core formation, which is initiated by the epoxidation of the C10-C11 olefin by the FAD-dependent oxidoreductase dpfgE, and is followed by a cyclization cascade catalyzed by the terpene cyclase dpfgB (Probable). The short chain dehydrogenase/reductase dpfgG then oxidizes the 8S hydroxy group to a ketone and the short chain dehydrogenase/reductase dpfgH reduces the ketone to the 8R hydroxy group to yield higginsianin B (PubMed:32286350). Higginsianin B is further methylated by the methyltransferase dpfgI to produce the intermediate named FDDP B (PubMed:32286350). The cytochrome P450 monooxygenase dfgpJ then catalyzes a three-step oxidation at C-27 to generate a carboxylic acid as well as C-26 hydroxylation (PubMed:32286350). Finally, methyltransferase dpfgK methylates the carboxylic acid generated by dpfgJ, yielding the final diterpenoid pyrones from the pathway which were named FDDP D and FDDP E (PubMed:32286350).</text>
</comment>
<comment type="pathway">
    <text evidence="6">Secondary metabolite biosynthesis; terpenoid biosynthesis.</text>
</comment>
<comment type="subcellular location">
    <subcellularLocation>
        <location evidence="3">Membrane</location>
        <topology evidence="3">Single-pass membrane protein</topology>
    </subcellularLocation>
</comment>
<comment type="biotechnology">
    <text evidence="6">Diterpenoid pyrones display various biological activities and FDDP E shows anti-HIV activity (PubMed:32286350). FDDP D and FDDP E show also inhibitory activity of 42-mer-amyloid beta aggregation that is involved in the pathogenesis of Alzheimer's disease (PubMed:32286350).</text>
</comment>
<comment type="similarity">
    <text evidence="8">Belongs to the short-chain dehydrogenases/reductases (SDR) family.</text>
</comment>
<accession>I1RL15</accession>
<dbReference type="EC" id="1.1.1.-" evidence="6"/>
<dbReference type="EMBL" id="HG970333">
    <property type="protein sequence ID" value="CEF79627.1"/>
    <property type="molecule type" value="Genomic_DNA"/>
</dbReference>
<dbReference type="RefSeq" id="XP_011320989.1">
    <property type="nucleotide sequence ID" value="XM_011322687.1"/>
</dbReference>
<dbReference type="SMR" id="I1RL15"/>
<dbReference type="STRING" id="229533.I1RL15"/>
<dbReference type="GlyCosmos" id="I1RL15">
    <property type="glycosylation" value="2 sites, No reported glycans"/>
</dbReference>
<dbReference type="KEGG" id="fgr:FGSG_04592"/>
<dbReference type="VEuPathDB" id="FungiDB:FGRAMPH1_01G15655"/>
<dbReference type="eggNOG" id="KOG1208">
    <property type="taxonomic scope" value="Eukaryota"/>
</dbReference>
<dbReference type="HOGENOM" id="CLU_010194_44_6_1"/>
<dbReference type="InParanoid" id="I1RL15"/>
<dbReference type="OrthoDB" id="17980at110618"/>
<dbReference type="UniPathway" id="UPA00213"/>
<dbReference type="Proteomes" id="UP000070720">
    <property type="component" value="Chromosome 2"/>
</dbReference>
<dbReference type="GO" id="GO:0016020">
    <property type="term" value="C:membrane"/>
    <property type="evidence" value="ECO:0007669"/>
    <property type="project" value="UniProtKB-SubCell"/>
</dbReference>
<dbReference type="GO" id="GO:0016491">
    <property type="term" value="F:oxidoreductase activity"/>
    <property type="evidence" value="ECO:0007669"/>
    <property type="project" value="UniProtKB-KW"/>
</dbReference>
<dbReference type="GO" id="GO:0016114">
    <property type="term" value="P:terpenoid biosynthetic process"/>
    <property type="evidence" value="ECO:0007669"/>
    <property type="project" value="UniProtKB-UniPathway"/>
</dbReference>
<dbReference type="Gene3D" id="3.40.50.720">
    <property type="entry name" value="NAD(P)-binding Rossmann-like Domain"/>
    <property type="match status" value="1"/>
</dbReference>
<dbReference type="InterPro" id="IPR036291">
    <property type="entry name" value="NAD(P)-bd_dom_sf"/>
</dbReference>
<dbReference type="InterPro" id="IPR002347">
    <property type="entry name" value="SDR_fam"/>
</dbReference>
<dbReference type="PANTHER" id="PTHR43157:SF31">
    <property type="entry name" value="PHOSPHATIDYLINOSITOL-GLYCAN BIOSYNTHESIS CLASS F PROTEIN"/>
    <property type="match status" value="1"/>
</dbReference>
<dbReference type="PANTHER" id="PTHR43157">
    <property type="entry name" value="PHOSPHATIDYLINOSITOL-GLYCAN BIOSYNTHESIS CLASS F PROTEIN-RELATED"/>
    <property type="match status" value="1"/>
</dbReference>
<dbReference type="Pfam" id="PF00106">
    <property type="entry name" value="adh_short"/>
    <property type="match status" value="1"/>
</dbReference>
<dbReference type="PRINTS" id="PR00081">
    <property type="entry name" value="GDHRDH"/>
</dbReference>
<dbReference type="SUPFAM" id="SSF51735">
    <property type="entry name" value="NAD(P)-binding Rossmann-fold domains"/>
    <property type="match status" value="1"/>
</dbReference>
<proteinExistence type="evidence at protein level"/>
<sequence>MSPLWVRRLCIRVVDSLYGSFLYLPLAILFLKRSVTGFGTGEWDESQIPKLDGKVAVVTGGNAGIGYYTVKHLASRGAKVYLGARSESRAKAAIKRLLEENPLIPQENVVWLRLDLANQSQVVDAAVELQSKEQRLDILVNNAGIDPYDYIRTADGFEMTMAVKYTNPAAAAQEESDVRVITVSSSGEAYSSPTNQFTSPKDLDDPCASPGWENSCLGQAMRYGTTKLANVLFASELQRRMDEEDANIISLSLNPGTVRTDGAANVMPFMVRPLVRFLFTAPERGADTSLFAATAEEIKENSERWKGRYLDGPGRIKVPSLRARDAVAGRNLWNITEAAVRGTGALDRL</sequence>
<name>DPFGH_GIBZE</name>
<feature type="chain" id="PRO_0000451551" description="Short chain dehydrogenase/reductase dpfgH">
    <location>
        <begin position="1"/>
        <end position="349"/>
    </location>
</feature>
<feature type="transmembrane region" description="Helical" evidence="3">
    <location>
        <begin position="9"/>
        <end position="31"/>
    </location>
</feature>
<feature type="active site" description="Proton donor" evidence="2">
    <location>
        <position position="191"/>
    </location>
</feature>
<feature type="active site" description="Proton donor" evidence="2">
    <location>
        <position position="192"/>
    </location>
</feature>
<feature type="active site" description="Proton acceptor" evidence="5">
    <location>
        <position position="223"/>
    </location>
</feature>
<feature type="active site" description="Lowers pKa of active site Tyr" evidence="2">
    <location>
        <position position="227"/>
    </location>
</feature>
<feature type="binding site" evidence="1">
    <location>
        <position position="65"/>
    </location>
    <ligand>
        <name>NADP(+)</name>
        <dbReference type="ChEBI" id="CHEBI:58349"/>
    </ligand>
</feature>
<feature type="binding site" evidence="1">
    <location>
        <position position="89"/>
    </location>
    <ligand>
        <name>NADP(+)</name>
        <dbReference type="ChEBI" id="CHEBI:58349"/>
    </ligand>
</feature>
<feature type="binding site" evidence="1">
    <location>
        <position position="115"/>
    </location>
    <ligand>
        <name>NADP(+)</name>
        <dbReference type="ChEBI" id="CHEBI:58349"/>
    </ligand>
</feature>
<feature type="binding site" evidence="2">
    <location>
        <position position="142"/>
    </location>
    <ligand>
        <name>NADP(+)</name>
        <dbReference type="ChEBI" id="CHEBI:58349"/>
    </ligand>
</feature>
<feature type="binding site" evidence="1">
    <location>
        <position position="164"/>
    </location>
    <ligand>
        <name>NADP(+)</name>
        <dbReference type="ChEBI" id="CHEBI:58349"/>
    </ligand>
</feature>
<feature type="binding site" evidence="2">
    <location>
        <position position="223"/>
    </location>
    <ligand>
        <name>NADP(+)</name>
        <dbReference type="ChEBI" id="CHEBI:58349"/>
    </ligand>
</feature>
<feature type="binding site" evidence="2">
    <location>
        <position position="227"/>
    </location>
    <ligand>
        <name>NADP(+)</name>
        <dbReference type="ChEBI" id="CHEBI:58349"/>
    </ligand>
</feature>
<feature type="glycosylation site" description="N-linked (GlcNAc...) asparagine" evidence="4">
    <location>
        <position position="118"/>
    </location>
</feature>
<feature type="glycosylation site" description="N-linked (GlcNAc...) asparagine" evidence="4">
    <location>
        <position position="334"/>
    </location>
</feature>
<gene>
    <name evidence="7" type="primary">dpfgH</name>
    <name type="ORF">FG04592</name>
    <name type="ORF">FGRAMPH1_01T15655</name>
</gene>
<organism>
    <name type="scientific">Gibberella zeae (strain ATCC MYA-4620 / CBS 123657 / FGSC 9075 / NRRL 31084 / PH-1)</name>
    <name type="common">Wheat head blight fungus</name>
    <name type="synonym">Fusarium graminearum</name>
    <dbReference type="NCBI Taxonomy" id="229533"/>
    <lineage>
        <taxon>Eukaryota</taxon>
        <taxon>Fungi</taxon>
        <taxon>Dikarya</taxon>
        <taxon>Ascomycota</taxon>
        <taxon>Pezizomycotina</taxon>
        <taxon>Sordariomycetes</taxon>
        <taxon>Hypocreomycetidae</taxon>
        <taxon>Hypocreales</taxon>
        <taxon>Nectriaceae</taxon>
        <taxon>Fusarium</taxon>
    </lineage>
</organism>
<evidence type="ECO:0000250" key="1">
    <source>
        <dbReference type="UniProtKB" id="L0E2Z4"/>
    </source>
</evidence>
<evidence type="ECO:0000250" key="2">
    <source>
        <dbReference type="UniProtKB" id="O93868"/>
    </source>
</evidence>
<evidence type="ECO:0000255" key="3"/>
<evidence type="ECO:0000255" key="4">
    <source>
        <dbReference type="PROSITE-ProRule" id="PRU00498"/>
    </source>
</evidence>
<evidence type="ECO:0000255" key="5">
    <source>
        <dbReference type="PROSITE-ProRule" id="PRU10001"/>
    </source>
</evidence>
<evidence type="ECO:0000269" key="6">
    <source>
    </source>
</evidence>
<evidence type="ECO:0000303" key="7">
    <source>
    </source>
</evidence>
<evidence type="ECO:0000305" key="8"/>
<evidence type="ECO:0000305" key="9">
    <source>
    </source>
</evidence>